<gene>
    <name type="primary">ycf65</name>
</gene>
<accession>Q9BAC5</accession>
<keyword id="KW-0150">Chloroplast</keyword>
<keyword id="KW-0934">Plastid</keyword>
<keyword id="KW-0687">Ribonucleoprotein</keyword>
<keyword id="KW-0689">Ribosomal protein</keyword>
<organism>
    <name type="scientific">Euglena granulata</name>
    <dbReference type="NCBI Taxonomy" id="69255"/>
    <lineage>
        <taxon>Eukaryota</taxon>
        <taxon>Discoba</taxon>
        <taxon>Euglenozoa</taxon>
        <taxon>Euglenida</taxon>
        <taxon>Spirocuta</taxon>
        <taxon>Euglenophyceae</taxon>
        <taxon>Euglenales</taxon>
        <taxon>Euglenaceae</taxon>
        <taxon>Euglena</taxon>
    </lineage>
</organism>
<dbReference type="EMBL" id="AF347930">
    <property type="protein sequence ID" value="AAK27689.1"/>
    <property type="molecule type" value="Genomic_DNA"/>
</dbReference>
<dbReference type="SMR" id="Q9BAC5"/>
<dbReference type="GO" id="GO:0009507">
    <property type="term" value="C:chloroplast"/>
    <property type="evidence" value="ECO:0007669"/>
    <property type="project" value="UniProtKB-SubCell"/>
</dbReference>
<dbReference type="GO" id="GO:1990904">
    <property type="term" value="C:ribonucleoprotein complex"/>
    <property type="evidence" value="ECO:0007669"/>
    <property type="project" value="UniProtKB-KW"/>
</dbReference>
<dbReference type="GO" id="GO:0005840">
    <property type="term" value="C:ribosome"/>
    <property type="evidence" value="ECO:0007669"/>
    <property type="project" value="UniProtKB-KW"/>
</dbReference>
<dbReference type="GO" id="GO:0003735">
    <property type="term" value="F:structural constituent of ribosome"/>
    <property type="evidence" value="ECO:0007669"/>
    <property type="project" value="InterPro"/>
</dbReference>
<dbReference type="GO" id="GO:0006412">
    <property type="term" value="P:translation"/>
    <property type="evidence" value="ECO:0007669"/>
    <property type="project" value="UniProtKB-UniRule"/>
</dbReference>
<dbReference type="Gene3D" id="3.30.390.140">
    <property type="match status" value="1"/>
</dbReference>
<dbReference type="HAMAP" id="MF_00619">
    <property type="entry name" value="Ribosomal_plastid_cS23"/>
    <property type="match status" value="1"/>
</dbReference>
<dbReference type="InterPro" id="IPR038447">
    <property type="entry name" value="PSRP-3/Ycf65_sf"/>
</dbReference>
<dbReference type="InterPro" id="IPR006924">
    <property type="entry name" value="Ribosomal_PSRP3/Ycf65"/>
</dbReference>
<dbReference type="PANTHER" id="PTHR35108">
    <property type="entry name" value="30S RIBOSOMAL PROTEIN 3, CHLOROPLASTIC"/>
    <property type="match status" value="1"/>
</dbReference>
<dbReference type="PANTHER" id="PTHR35108:SF1">
    <property type="entry name" value="OS04G0461100 PROTEIN"/>
    <property type="match status" value="1"/>
</dbReference>
<dbReference type="Pfam" id="PF04839">
    <property type="entry name" value="PSRP-3_Ycf65"/>
    <property type="match status" value="1"/>
</dbReference>
<protein>
    <recommendedName>
        <fullName evidence="2">Small ribosomal subunit protein cS23</fullName>
    </recommendedName>
    <alternativeName>
        <fullName>30S ribosomal protein 3, chloroplastic</fullName>
        <shortName>PSRP-3</shortName>
    </alternativeName>
</protein>
<feature type="chain" id="PRO_0000216756" description="Small ribosomal subunit protein cS23">
    <location>
        <begin position="1"/>
        <end position="103"/>
    </location>
</feature>
<geneLocation type="chloroplast"/>
<reference key="1">
    <citation type="submission" date="2001-02" db="EMBL/GenBank/DDBJ databases">
        <title>An evolutionary study of ycf65 in Euglena chloroplasts.</title>
        <authorList>
            <person name="Hallick R.B."/>
            <person name="De Armond R.L."/>
        </authorList>
    </citation>
    <scope>NUCLEOTIDE SEQUENCE [GENOMIC DNA]</scope>
</reference>
<name>RRP3_EUGGA</name>
<proteinExistence type="inferred from homology"/>
<comment type="function">
    <text evidence="1">Probably a ribosomal protein or a ribosome-associated protein.</text>
</comment>
<comment type="subunit">
    <text evidence="1">Part of the 30S ribosomal subunit.</text>
</comment>
<comment type="subcellular location">
    <subcellularLocation>
        <location>Plastid</location>
        <location>Chloroplast</location>
    </subcellularLocation>
</comment>
<comment type="similarity">
    <text evidence="3">Belongs to the chloroplast-specific ribosomal protein cS23 family.</text>
</comment>
<evidence type="ECO:0000250" key="1"/>
<evidence type="ECO:0000255" key="2">
    <source>
        <dbReference type="HAMAP-Rule" id="MF_00619"/>
    </source>
</evidence>
<evidence type="ECO:0000305" key="3"/>
<sequence>MKKELILKFLWLEKSIAVCLDQKVGDSITPLTEFFFWPQKDAWEEMKNFLESQSWITQSDSVNLLNNITEVINFWQERDTNVIDRKHISNLREKFPDIIVIGQ</sequence>